<proteinExistence type="inferred from homology"/>
<keyword id="KW-0479">Metal-binding</keyword>
<keyword id="KW-0520">NAD</keyword>
<keyword id="KW-0521">NADP</keyword>
<keyword id="KW-0558">Oxidation</keyword>
<keyword id="KW-0560">Oxidoreductase</keyword>
<keyword id="KW-0630">Potassium</keyword>
<sequence>MSDVQVHQLYIHGRYVEATSGKTFNSINPANGEIIATLQQASEQDIEAAVKSAQQGQKIWAAMTAMERSRILRRAVDILRERNDELARLETLDTGKAYSETSTVDIVTGADVLEYYAGLATAIQGEQVPLRESSFFYTRREPLGVVAGIGAWNYPIQIALWKSAPALAAGNAMIFKPSETTPLTALKLAEIYTEAGLPDGVFNVVQGAGREIGQWLTEHPVIEKISFTGGVETGKKVMASAAGSTLKEVTMELGGKSPLIICEDADLNRAADIAVMANFFSSGQVCTNGTRVFVPKSRLADFEKAVVERVKRIRVGDPMAEDTNFGPLTSFPHMEKVLSFIESGKQQGAKVLIGGGRATEGELAKGAYVLPTVFSDCTDQMAIVQEEIFGPVMSILSYETEEEVIQRANDTTFGLAAGVVTQDISRAHRIIHQIEAGICWINTWGESPAEMPVGGYKQSGVGRENGLTTLGHYTRIKSIQVELGDYQSIF</sequence>
<dbReference type="EC" id="1.2.1.8" evidence="1"/>
<dbReference type="EMBL" id="CP001182">
    <property type="protein sequence ID" value="ACJ40795.1"/>
    <property type="molecule type" value="Genomic_DNA"/>
</dbReference>
<dbReference type="RefSeq" id="WP_001286307.1">
    <property type="nucleotide sequence ID" value="NC_011586.2"/>
</dbReference>
<dbReference type="SMR" id="B7I896"/>
<dbReference type="KEGG" id="abn:AB57_1003"/>
<dbReference type="HOGENOM" id="CLU_005391_0_0_6"/>
<dbReference type="UniPathway" id="UPA00529">
    <property type="reaction ID" value="UER00386"/>
</dbReference>
<dbReference type="Proteomes" id="UP000007094">
    <property type="component" value="Chromosome"/>
</dbReference>
<dbReference type="GO" id="GO:0008802">
    <property type="term" value="F:betaine-aldehyde dehydrogenase (NAD+) activity"/>
    <property type="evidence" value="ECO:0007669"/>
    <property type="project" value="UniProtKB-UniRule"/>
</dbReference>
<dbReference type="GO" id="GO:0046872">
    <property type="term" value="F:metal ion binding"/>
    <property type="evidence" value="ECO:0007669"/>
    <property type="project" value="UniProtKB-KW"/>
</dbReference>
<dbReference type="GO" id="GO:0019285">
    <property type="term" value="P:glycine betaine biosynthetic process from choline"/>
    <property type="evidence" value="ECO:0007669"/>
    <property type="project" value="UniProtKB-UniRule"/>
</dbReference>
<dbReference type="CDD" id="cd07090">
    <property type="entry name" value="ALDH_F9_TMBADH"/>
    <property type="match status" value="1"/>
</dbReference>
<dbReference type="FunFam" id="3.40.309.10:FF:000014">
    <property type="entry name" value="NAD/NADP-dependent betaine aldehyde dehydrogenase"/>
    <property type="match status" value="1"/>
</dbReference>
<dbReference type="FunFam" id="3.40.605.10:FF:000007">
    <property type="entry name" value="NAD/NADP-dependent betaine aldehyde dehydrogenase"/>
    <property type="match status" value="1"/>
</dbReference>
<dbReference type="Gene3D" id="3.40.605.10">
    <property type="entry name" value="Aldehyde Dehydrogenase, Chain A, domain 1"/>
    <property type="match status" value="1"/>
</dbReference>
<dbReference type="Gene3D" id="3.40.309.10">
    <property type="entry name" value="Aldehyde Dehydrogenase, Chain A, domain 2"/>
    <property type="match status" value="1"/>
</dbReference>
<dbReference type="HAMAP" id="MF_00804">
    <property type="entry name" value="BADH"/>
    <property type="match status" value="1"/>
</dbReference>
<dbReference type="InterPro" id="IPR016161">
    <property type="entry name" value="Ald_DH/histidinol_DH"/>
</dbReference>
<dbReference type="InterPro" id="IPR016163">
    <property type="entry name" value="Ald_DH_C"/>
</dbReference>
<dbReference type="InterPro" id="IPR016160">
    <property type="entry name" value="Ald_DH_CS_CYS"/>
</dbReference>
<dbReference type="InterPro" id="IPR029510">
    <property type="entry name" value="Ald_DH_CS_GLU"/>
</dbReference>
<dbReference type="InterPro" id="IPR016162">
    <property type="entry name" value="Ald_DH_N"/>
</dbReference>
<dbReference type="InterPro" id="IPR015590">
    <property type="entry name" value="Aldehyde_DH_dom"/>
</dbReference>
<dbReference type="InterPro" id="IPR011264">
    <property type="entry name" value="BADH"/>
</dbReference>
<dbReference type="NCBIfam" id="TIGR01804">
    <property type="entry name" value="BADH"/>
    <property type="match status" value="1"/>
</dbReference>
<dbReference type="NCBIfam" id="NF009725">
    <property type="entry name" value="PRK13252.1"/>
    <property type="match status" value="1"/>
</dbReference>
<dbReference type="PANTHER" id="PTHR11699">
    <property type="entry name" value="ALDEHYDE DEHYDROGENASE-RELATED"/>
    <property type="match status" value="1"/>
</dbReference>
<dbReference type="Pfam" id="PF00171">
    <property type="entry name" value="Aldedh"/>
    <property type="match status" value="1"/>
</dbReference>
<dbReference type="SUPFAM" id="SSF53720">
    <property type="entry name" value="ALDH-like"/>
    <property type="match status" value="1"/>
</dbReference>
<dbReference type="PROSITE" id="PS00070">
    <property type="entry name" value="ALDEHYDE_DEHYDR_CYS"/>
    <property type="match status" value="1"/>
</dbReference>
<dbReference type="PROSITE" id="PS00687">
    <property type="entry name" value="ALDEHYDE_DEHYDR_GLU"/>
    <property type="match status" value="1"/>
</dbReference>
<feature type="chain" id="PRO_1000133934" description="Betaine aldehyde dehydrogenase">
    <location>
        <begin position="1"/>
        <end position="490"/>
    </location>
</feature>
<feature type="active site" description="Charge relay system" evidence="1">
    <location>
        <position position="162"/>
    </location>
</feature>
<feature type="active site" description="Proton acceptor" evidence="1">
    <location>
        <position position="252"/>
    </location>
</feature>
<feature type="active site" description="Nucleophile" evidence="1">
    <location>
        <position position="286"/>
    </location>
</feature>
<feature type="active site" description="Charge relay system" evidence="1">
    <location>
        <position position="464"/>
    </location>
</feature>
<feature type="binding site" evidence="1">
    <location>
        <position position="26"/>
    </location>
    <ligand>
        <name>K(+)</name>
        <dbReference type="ChEBI" id="CHEBI:29103"/>
        <label>1</label>
    </ligand>
</feature>
<feature type="binding site" evidence="1">
    <location>
        <position position="27"/>
    </location>
    <ligand>
        <name>K(+)</name>
        <dbReference type="ChEBI" id="CHEBI:29103"/>
        <label>1</label>
    </ligand>
</feature>
<feature type="binding site" evidence="1">
    <location>
        <position position="93"/>
    </location>
    <ligand>
        <name>K(+)</name>
        <dbReference type="ChEBI" id="CHEBI:29103"/>
        <label>1</label>
    </ligand>
</feature>
<feature type="binding site" evidence="1">
    <location>
        <begin position="150"/>
        <end position="152"/>
    </location>
    <ligand>
        <name>NAD(+)</name>
        <dbReference type="ChEBI" id="CHEBI:57540"/>
    </ligand>
</feature>
<feature type="binding site" evidence="1">
    <location>
        <begin position="176"/>
        <end position="179"/>
    </location>
    <ligand>
        <name>NAD(+)</name>
        <dbReference type="ChEBI" id="CHEBI:57540"/>
    </ligand>
</feature>
<feature type="binding site" evidence="1">
    <location>
        <begin position="230"/>
        <end position="233"/>
    </location>
    <ligand>
        <name>NAD(+)</name>
        <dbReference type="ChEBI" id="CHEBI:57540"/>
    </ligand>
</feature>
<feature type="binding site" evidence="1">
    <location>
        <position position="246"/>
    </location>
    <ligand>
        <name>K(+)</name>
        <dbReference type="ChEBI" id="CHEBI:29103"/>
        <label>2</label>
    </ligand>
</feature>
<feature type="binding site" evidence="1">
    <location>
        <position position="254"/>
    </location>
    <ligand>
        <name>NAD(+)</name>
        <dbReference type="ChEBI" id="CHEBI:57540"/>
    </ligand>
</feature>
<feature type="binding site" description="covalent" evidence="1">
    <location>
        <position position="286"/>
    </location>
    <ligand>
        <name>NAD(+)</name>
        <dbReference type="ChEBI" id="CHEBI:57540"/>
    </ligand>
</feature>
<feature type="binding site" evidence="1">
    <location>
        <position position="387"/>
    </location>
    <ligand>
        <name>NAD(+)</name>
        <dbReference type="ChEBI" id="CHEBI:57540"/>
    </ligand>
</feature>
<feature type="binding site" evidence="1">
    <location>
        <position position="457"/>
    </location>
    <ligand>
        <name>K(+)</name>
        <dbReference type="ChEBI" id="CHEBI:29103"/>
        <label>2</label>
    </ligand>
</feature>
<feature type="binding site" evidence="1">
    <location>
        <position position="460"/>
    </location>
    <ligand>
        <name>K(+)</name>
        <dbReference type="ChEBI" id="CHEBI:29103"/>
        <label>2</label>
    </ligand>
</feature>
<feature type="site" description="Seems to be a necessary countercharge to the potassium cations" evidence="1">
    <location>
        <position position="248"/>
    </location>
</feature>
<feature type="modified residue" description="Cysteine sulfenic acid (-SOH)" evidence="1">
    <location>
        <position position="286"/>
    </location>
</feature>
<organism>
    <name type="scientific">Acinetobacter baumannii (strain AB0057)</name>
    <dbReference type="NCBI Taxonomy" id="480119"/>
    <lineage>
        <taxon>Bacteria</taxon>
        <taxon>Pseudomonadati</taxon>
        <taxon>Pseudomonadota</taxon>
        <taxon>Gammaproteobacteria</taxon>
        <taxon>Moraxellales</taxon>
        <taxon>Moraxellaceae</taxon>
        <taxon>Acinetobacter</taxon>
        <taxon>Acinetobacter calcoaceticus/baumannii complex</taxon>
    </lineage>
</organism>
<evidence type="ECO:0000255" key="1">
    <source>
        <dbReference type="HAMAP-Rule" id="MF_00804"/>
    </source>
</evidence>
<reference key="1">
    <citation type="journal article" date="2008" name="J. Bacteriol.">
        <title>Comparative genome sequence analysis of multidrug-resistant Acinetobacter baumannii.</title>
        <authorList>
            <person name="Adams M.D."/>
            <person name="Goglin K."/>
            <person name="Molyneaux N."/>
            <person name="Hujer K.M."/>
            <person name="Lavender H."/>
            <person name="Jamison J.J."/>
            <person name="MacDonald I.J."/>
            <person name="Martin K.M."/>
            <person name="Russo T."/>
            <person name="Campagnari A.A."/>
            <person name="Hujer A.M."/>
            <person name="Bonomo R.A."/>
            <person name="Gill S.R."/>
        </authorList>
    </citation>
    <scope>NUCLEOTIDE SEQUENCE [LARGE SCALE GENOMIC DNA]</scope>
    <source>
        <strain>AB0057</strain>
    </source>
</reference>
<gene>
    <name evidence="1" type="primary">betB</name>
    <name type="ordered locus">AB57_1003</name>
</gene>
<name>BETB_ACIB5</name>
<accession>B7I896</accession>
<comment type="function">
    <text evidence="1">Involved in the biosynthesis of the osmoprotectant glycine betaine. Catalyzes the irreversible oxidation of betaine aldehyde to the corresponding acid.</text>
</comment>
<comment type="catalytic activity">
    <reaction evidence="1">
        <text>betaine aldehyde + NAD(+) + H2O = glycine betaine + NADH + 2 H(+)</text>
        <dbReference type="Rhea" id="RHEA:15305"/>
        <dbReference type="ChEBI" id="CHEBI:15377"/>
        <dbReference type="ChEBI" id="CHEBI:15378"/>
        <dbReference type="ChEBI" id="CHEBI:15710"/>
        <dbReference type="ChEBI" id="CHEBI:17750"/>
        <dbReference type="ChEBI" id="CHEBI:57540"/>
        <dbReference type="ChEBI" id="CHEBI:57945"/>
        <dbReference type="EC" id="1.2.1.8"/>
    </reaction>
    <physiologicalReaction direction="left-to-right" evidence="1">
        <dbReference type="Rhea" id="RHEA:15306"/>
    </physiologicalReaction>
</comment>
<comment type="cofactor">
    <cofactor evidence="1">
        <name>K(+)</name>
        <dbReference type="ChEBI" id="CHEBI:29103"/>
    </cofactor>
    <text evidence="1">Binds 2 potassium ions per subunit.</text>
</comment>
<comment type="pathway">
    <text evidence="1">Amine and polyamine biosynthesis; betaine biosynthesis via choline pathway; betaine from betaine aldehyde: step 1/1.</text>
</comment>
<comment type="subunit">
    <text evidence="1">Dimer of dimers.</text>
</comment>
<comment type="similarity">
    <text evidence="1">Belongs to the aldehyde dehydrogenase family.</text>
</comment>
<protein>
    <recommendedName>
        <fullName evidence="1">Betaine aldehyde dehydrogenase</fullName>
        <shortName evidence="1">BADH</shortName>
        <ecNumber evidence="1">1.2.1.8</ecNumber>
    </recommendedName>
</protein>